<dbReference type="EC" id="6.3.5.3" evidence="1"/>
<dbReference type="EC" id="3.5.1.2" evidence="1"/>
<dbReference type="EMBL" id="BA000036">
    <property type="protein sequence ID" value="BAB99982.1"/>
    <property type="molecule type" value="Genomic_DNA"/>
</dbReference>
<dbReference type="EMBL" id="BX927155">
    <property type="protein sequence ID" value="CAF21251.1"/>
    <property type="molecule type" value="Genomic_DNA"/>
</dbReference>
<dbReference type="RefSeq" id="NP_601787.1">
    <property type="nucleotide sequence ID" value="NC_003450.3"/>
</dbReference>
<dbReference type="RefSeq" id="WP_003863118.1">
    <property type="nucleotide sequence ID" value="NC_006958.1"/>
</dbReference>
<dbReference type="SMR" id="Q8NMI4"/>
<dbReference type="STRING" id="196627.cg2863"/>
<dbReference type="GeneID" id="1020535"/>
<dbReference type="KEGG" id="cgb:cg2863"/>
<dbReference type="KEGG" id="cgl:Cgl2589"/>
<dbReference type="PATRIC" id="fig|196627.13.peg.2523"/>
<dbReference type="eggNOG" id="COG0047">
    <property type="taxonomic scope" value="Bacteria"/>
</dbReference>
<dbReference type="HOGENOM" id="CLU_001031_3_1_11"/>
<dbReference type="OrthoDB" id="9804441at2"/>
<dbReference type="BioCyc" id="CORYNE:G18NG-12205-MONOMER"/>
<dbReference type="UniPathway" id="UPA00074">
    <property type="reaction ID" value="UER00128"/>
</dbReference>
<dbReference type="Proteomes" id="UP000000582">
    <property type="component" value="Chromosome"/>
</dbReference>
<dbReference type="Proteomes" id="UP000001009">
    <property type="component" value="Chromosome"/>
</dbReference>
<dbReference type="GO" id="GO:0005737">
    <property type="term" value="C:cytoplasm"/>
    <property type="evidence" value="ECO:0007669"/>
    <property type="project" value="UniProtKB-SubCell"/>
</dbReference>
<dbReference type="GO" id="GO:0005524">
    <property type="term" value="F:ATP binding"/>
    <property type="evidence" value="ECO:0007669"/>
    <property type="project" value="UniProtKB-KW"/>
</dbReference>
<dbReference type="GO" id="GO:0004359">
    <property type="term" value="F:glutaminase activity"/>
    <property type="evidence" value="ECO:0007669"/>
    <property type="project" value="UniProtKB-EC"/>
</dbReference>
<dbReference type="GO" id="GO:0004642">
    <property type="term" value="F:phosphoribosylformylglycinamidine synthase activity"/>
    <property type="evidence" value="ECO:0007669"/>
    <property type="project" value="UniProtKB-UniRule"/>
</dbReference>
<dbReference type="GO" id="GO:0006189">
    <property type="term" value="P:'de novo' IMP biosynthetic process"/>
    <property type="evidence" value="ECO:0007669"/>
    <property type="project" value="UniProtKB-UniRule"/>
</dbReference>
<dbReference type="CDD" id="cd01740">
    <property type="entry name" value="GATase1_FGAR_AT"/>
    <property type="match status" value="1"/>
</dbReference>
<dbReference type="FunFam" id="3.40.50.880:FF:000019">
    <property type="entry name" value="Phosphoribosylformylglycinamidine synthase subunit PurQ"/>
    <property type="match status" value="1"/>
</dbReference>
<dbReference type="Gene3D" id="3.40.50.880">
    <property type="match status" value="1"/>
</dbReference>
<dbReference type="HAMAP" id="MF_00421">
    <property type="entry name" value="PurQ"/>
    <property type="match status" value="1"/>
</dbReference>
<dbReference type="InterPro" id="IPR029062">
    <property type="entry name" value="Class_I_gatase-like"/>
</dbReference>
<dbReference type="InterPro" id="IPR010075">
    <property type="entry name" value="PRibForGlyAmidine_synth_PurQ"/>
</dbReference>
<dbReference type="NCBIfam" id="TIGR01737">
    <property type="entry name" value="FGAM_synth_I"/>
    <property type="match status" value="1"/>
</dbReference>
<dbReference type="NCBIfam" id="NF002957">
    <property type="entry name" value="PRK03619.1"/>
    <property type="match status" value="1"/>
</dbReference>
<dbReference type="PANTHER" id="PTHR47552">
    <property type="entry name" value="PHOSPHORIBOSYLFORMYLGLYCINAMIDINE SYNTHASE SUBUNIT PURQ"/>
    <property type="match status" value="1"/>
</dbReference>
<dbReference type="PANTHER" id="PTHR47552:SF1">
    <property type="entry name" value="PHOSPHORIBOSYLFORMYLGLYCINAMIDINE SYNTHASE SUBUNIT PURQ"/>
    <property type="match status" value="1"/>
</dbReference>
<dbReference type="Pfam" id="PF13507">
    <property type="entry name" value="GATase_5"/>
    <property type="match status" value="1"/>
</dbReference>
<dbReference type="PIRSF" id="PIRSF001586">
    <property type="entry name" value="FGAM_synth_I"/>
    <property type="match status" value="1"/>
</dbReference>
<dbReference type="SMART" id="SM01211">
    <property type="entry name" value="GATase_5"/>
    <property type="match status" value="1"/>
</dbReference>
<dbReference type="SUPFAM" id="SSF52317">
    <property type="entry name" value="Class I glutamine amidotransferase-like"/>
    <property type="match status" value="1"/>
</dbReference>
<dbReference type="PROSITE" id="PS51273">
    <property type="entry name" value="GATASE_TYPE_1"/>
    <property type="match status" value="1"/>
</dbReference>
<gene>
    <name evidence="1" type="primary">purQ</name>
    <name type="ordered locus">Cgl2589</name>
    <name type="ordered locus">cg2863</name>
</gene>
<accession>Q8NMI4</accession>
<name>PURQ_CORGL</name>
<keyword id="KW-0067">ATP-binding</keyword>
<keyword id="KW-0963">Cytoplasm</keyword>
<keyword id="KW-0315">Glutamine amidotransferase</keyword>
<keyword id="KW-0378">Hydrolase</keyword>
<keyword id="KW-0436">Ligase</keyword>
<keyword id="KW-0547">Nucleotide-binding</keyword>
<keyword id="KW-0658">Purine biosynthesis</keyword>
<keyword id="KW-1185">Reference proteome</keyword>
<reference key="1">
    <citation type="journal article" date="2003" name="Appl. Microbiol. Biotechnol.">
        <title>The Corynebacterium glutamicum genome: features and impacts on biotechnological processes.</title>
        <authorList>
            <person name="Ikeda M."/>
            <person name="Nakagawa S."/>
        </authorList>
    </citation>
    <scope>NUCLEOTIDE SEQUENCE [LARGE SCALE GENOMIC DNA]</scope>
    <source>
        <strain>ATCC 13032 / DSM 20300 / JCM 1318 / BCRC 11384 / CCUG 27702 / LMG 3730 / NBRC 12168 / NCIMB 10025 / NRRL B-2784 / 534</strain>
    </source>
</reference>
<reference key="2">
    <citation type="journal article" date="2003" name="J. Biotechnol.">
        <title>The complete Corynebacterium glutamicum ATCC 13032 genome sequence and its impact on the production of L-aspartate-derived amino acids and vitamins.</title>
        <authorList>
            <person name="Kalinowski J."/>
            <person name="Bathe B."/>
            <person name="Bartels D."/>
            <person name="Bischoff N."/>
            <person name="Bott M."/>
            <person name="Burkovski A."/>
            <person name="Dusch N."/>
            <person name="Eggeling L."/>
            <person name="Eikmanns B.J."/>
            <person name="Gaigalat L."/>
            <person name="Goesmann A."/>
            <person name="Hartmann M."/>
            <person name="Huthmacher K."/>
            <person name="Kraemer R."/>
            <person name="Linke B."/>
            <person name="McHardy A.C."/>
            <person name="Meyer F."/>
            <person name="Moeckel B."/>
            <person name="Pfefferle W."/>
            <person name="Puehler A."/>
            <person name="Rey D.A."/>
            <person name="Rueckert C."/>
            <person name="Rupp O."/>
            <person name="Sahm H."/>
            <person name="Wendisch V.F."/>
            <person name="Wiegraebe I."/>
            <person name="Tauch A."/>
        </authorList>
    </citation>
    <scope>NUCLEOTIDE SEQUENCE [LARGE SCALE GENOMIC DNA]</scope>
    <source>
        <strain>ATCC 13032 / DSM 20300 / JCM 1318 / BCRC 11384 / CCUG 27702 / LMG 3730 / NBRC 12168 / NCIMB 10025 / NRRL B-2784 / 534</strain>
    </source>
</reference>
<feature type="chain" id="PRO_0000100551" description="Phosphoribosylformylglycinamidine synthase subunit PurQ">
    <location>
        <begin position="1"/>
        <end position="223"/>
    </location>
</feature>
<feature type="domain" description="Glutamine amidotransferase type-1" evidence="1">
    <location>
        <begin position="4"/>
        <end position="223"/>
    </location>
</feature>
<feature type="active site" description="Nucleophile" evidence="1">
    <location>
        <position position="87"/>
    </location>
</feature>
<feature type="active site" evidence="1">
    <location>
        <position position="195"/>
    </location>
</feature>
<feature type="active site" evidence="1">
    <location>
        <position position="197"/>
    </location>
</feature>
<proteinExistence type="inferred from homology"/>
<sequence length="223" mass="23540">MSAKIGVITFPGTLDDVDAARAARIAGAEVISLWHADEDLKGVDAVVVPGGFSYGDYLRTGAISALAPVMQSVIEQAGKGMPVLGICNGFQILTEARLLPGALTRNKGLHFHCVDAHLVVENNTTAWTNTLEKGQQILIPAKHGEGRFQADAETIAQLEGEGRVVFRYTDNFNGSVNDIAGITNETGRIVGLMPHPEHAVEKLTGPSIDGLELFLSAVGTIAA</sequence>
<comment type="function">
    <text evidence="1">Part of the phosphoribosylformylglycinamidine synthase complex involved in the purines biosynthetic pathway. Catalyzes the ATP-dependent conversion of formylglycinamide ribonucleotide (FGAR) and glutamine to yield formylglycinamidine ribonucleotide (FGAM) and glutamate. The FGAM synthase complex is composed of three subunits. PurQ produces an ammonia molecule by converting glutamine to glutamate. PurL transfers the ammonia molecule to FGAR to form FGAM in an ATP-dependent manner. PurS interacts with PurQ and PurL and is thought to assist in the transfer of the ammonia molecule from PurQ to PurL.</text>
</comment>
<comment type="catalytic activity">
    <reaction evidence="1">
        <text>N(2)-formyl-N(1)-(5-phospho-beta-D-ribosyl)glycinamide + L-glutamine + ATP + H2O = 2-formamido-N(1)-(5-O-phospho-beta-D-ribosyl)acetamidine + L-glutamate + ADP + phosphate + H(+)</text>
        <dbReference type="Rhea" id="RHEA:17129"/>
        <dbReference type="ChEBI" id="CHEBI:15377"/>
        <dbReference type="ChEBI" id="CHEBI:15378"/>
        <dbReference type="ChEBI" id="CHEBI:29985"/>
        <dbReference type="ChEBI" id="CHEBI:30616"/>
        <dbReference type="ChEBI" id="CHEBI:43474"/>
        <dbReference type="ChEBI" id="CHEBI:58359"/>
        <dbReference type="ChEBI" id="CHEBI:147286"/>
        <dbReference type="ChEBI" id="CHEBI:147287"/>
        <dbReference type="ChEBI" id="CHEBI:456216"/>
        <dbReference type="EC" id="6.3.5.3"/>
    </reaction>
</comment>
<comment type="catalytic activity">
    <reaction evidence="1">
        <text>L-glutamine + H2O = L-glutamate + NH4(+)</text>
        <dbReference type="Rhea" id="RHEA:15889"/>
        <dbReference type="ChEBI" id="CHEBI:15377"/>
        <dbReference type="ChEBI" id="CHEBI:28938"/>
        <dbReference type="ChEBI" id="CHEBI:29985"/>
        <dbReference type="ChEBI" id="CHEBI:58359"/>
        <dbReference type="EC" id="3.5.1.2"/>
    </reaction>
</comment>
<comment type="pathway">
    <text evidence="1">Purine metabolism; IMP biosynthesis via de novo pathway; 5-amino-1-(5-phospho-D-ribosyl)imidazole from N(2)-formyl-N(1)-(5-phospho-D-ribosyl)glycinamide: step 1/2.</text>
</comment>
<comment type="subunit">
    <text evidence="1">Part of the FGAM synthase complex composed of 1 PurL, 1 PurQ and 2 PurS subunits.</text>
</comment>
<comment type="subcellular location">
    <subcellularLocation>
        <location evidence="1">Cytoplasm</location>
    </subcellularLocation>
</comment>
<protein>
    <recommendedName>
        <fullName evidence="1">Phosphoribosylformylglycinamidine synthase subunit PurQ</fullName>
        <shortName evidence="1">FGAM synthase</shortName>
        <ecNumber evidence="1">6.3.5.3</ecNumber>
    </recommendedName>
    <alternativeName>
        <fullName evidence="1">Formylglycinamide ribonucleotide amidotransferase subunit I</fullName>
        <shortName evidence="1">FGAR amidotransferase I</shortName>
        <shortName evidence="1">FGAR-AT I</shortName>
    </alternativeName>
    <alternativeName>
        <fullName evidence="1">Glutaminase PurQ</fullName>
        <ecNumber evidence="1">3.5.1.2</ecNumber>
    </alternativeName>
    <alternativeName>
        <fullName evidence="1">Phosphoribosylformylglycinamidine synthase subunit I</fullName>
    </alternativeName>
</protein>
<organism>
    <name type="scientific">Corynebacterium glutamicum (strain ATCC 13032 / DSM 20300 / JCM 1318 / BCRC 11384 / CCUG 27702 / LMG 3730 / NBRC 12168 / NCIMB 10025 / NRRL B-2784 / 534)</name>
    <dbReference type="NCBI Taxonomy" id="196627"/>
    <lineage>
        <taxon>Bacteria</taxon>
        <taxon>Bacillati</taxon>
        <taxon>Actinomycetota</taxon>
        <taxon>Actinomycetes</taxon>
        <taxon>Mycobacteriales</taxon>
        <taxon>Corynebacteriaceae</taxon>
        <taxon>Corynebacterium</taxon>
    </lineage>
</organism>
<evidence type="ECO:0000255" key="1">
    <source>
        <dbReference type="HAMAP-Rule" id="MF_00421"/>
    </source>
</evidence>